<keyword id="KW-1003">Cell membrane</keyword>
<keyword id="KW-0378">Hydrolase</keyword>
<keyword id="KW-0472">Membrane</keyword>
<keyword id="KW-0645">Protease</keyword>
<keyword id="KW-0673">Quorum sensing</keyword>
<keyword id="KW-0812">Transmembrane</keyword>
<keyword id="KW-1133">Transmembrane helix</keyword>
<keyword id="KW-0843">Virulence</keyword>
<organism>
    <name type="scientific">Staphylococcus aureus (strain N315)</name>
    <dbReference type="NCBI Taxonomy" id="158879"/>
    <lineage>
        <taxon>Bacteria</taxon>
        <taxon>Bacillati</taxon>
        <taxon>Bacillota</taxon>
        <taxon>Bacilli</taxon>
        <taxon>Bacillales</taxon>
        <taxon>Staphylococcaceae</taxon>
        <taxon>Staphylococcus</taxon>
    </lineage>
</organism>
<name>AGRB_STAAN</name>
<proteinExistence type="inferred from homology"/>
<protein>
    <recommendedName>
        <fullName evidence="1">Accessory gene regulator protein B</fullName>
        <ecNumber evidence="1">3.4.-.-</ecNumber>
    </recommendedName>
</protein>
<accession>P61637</accession>
<accession>O33585</accession>
<dbReference type="EC" id="3.4.-.-" evidence="1"/>
<dbReference type="EMBL" id="BA000018">
    <property type="protein sequence ID" value="BAB43123.1"/>
    <property type="molecule type" value="Genomic_DNA"/>
</dbReference>
<dbReference type="PIR" id="B89995">
    <property type="entry name" value="B89995"/>
</dbReference>
<dbReference type="RefSeq" id="WP_001105696.1">
    <property type="nucleotide sequence ID" value="NC_002745.2"/>
</dbReference>
<dbReference type="MEROPS" id="C75.001"/>
<dbReference type="EnsemblBacteria" id="BAB43123">
    <property type="protein sequence ID" value="BAB43123"/>
    <property type="gene ID" value="BAB43123"/>
</dbReference>
<dbReference type="KEGG" id="sau:SA1842"/>
<dbReference type="HOGENOM" id="CLU_098969_2_2_9"/>
<dbReference type="GO" id="GO:0005886">
    <property type="term" value="C:plasma membrane"/>
    <property type="evidence" value="ECO:0007669"/>
    <property type="project" value="UniProtKB-SubCell"/>
</dbReference>
<dbReference type="GO" id="GO:0008233">
    <property type="term" value="F:peptidase activity"/>
    <property type="evidence" value="ECO:0007669"/>
    <property type="project" value="UniProtKB-UniRule"/>
</dbReference>
<dbReference type="GO" id="GO:0006508">
    <property type="term" value="P:proteolysis"/>
    <property type="evidence" value="ECO:0007669"/>
    <property type="project" value="UniProtKB-KW"/>
</dbReference>
<dbReference type="GO" id="GO:0009372">
    <property type="term" value="P:quorum sensing"/>
    <property type="evidence" value="ECO:0007669"/>
    <property type="project" value="UniProtKB-UniRule"/>
</dbReference>
<dbReference type="HAMAP" id="MF_00784">
    <property type="entry name" value="AgrB"/>
    <property type="match status" value="1"/>
</dbReference>
<dbReference type="InterPro" id="IPR006741">
    <property type="entry name" value="AgrB"/>
</dbReference>
<dbReference type="Pfam" id="PF04647">
    <property type="entry name" value="AgrB"/>
    <property type="match status" value="1"/>
</dbReference>
<dbReference type="SMART" id="SM00793">
    <property type="entry name" value="AgrB"/>
    <property type="match status" value="1"/>
</dbReference>
<reference key="1">
    <citation type="journal article" date="2001" name="Lancet">
        <title>Whole genome sequencing of meticillin-resistant Staphylococcus aureus.</title>
        <authorList>
            <person name="Kuroda M."/>
            <person name="Ohta T."/>
            <person name="Uchiyama I."/>
            <person name="Baba T."/>
            <person name="Yuzawa H."/>
            <person name="Kobayashi I."/>
            <person name="Cui L."/>
            <person name="Oguchi A."/>
            <person name="Aoki K."/>
            <person name="Nagai Y."/>
            <person name="Lian J.-Q."/>
            <person name="Ito T."/>
            <person name="Kanamori M."/>
            <person name="Matsumaru H."/>
            <person name="Maruyama A."/>
            <person name="Murakami H."/>
            <person name="Hosoyama A."/>
            <person name="Mizutani-Ui Y."/>
            <person name="Takahashi N.K."/>
            <person name="Sawano T."/>
            <person name="Inoue R."/>
            <person name="Kaito C."/>
            <person name="Sekimizu K."/>
            <person name="Hirakawa H."/>
            <person name="Kuhara S."/>
            <person name="Goto S."/>
            <person name="Yabuzaki J."/>
            <person name="Kanehisa M."/>
            <person name="Yamashita A."/>
            <person name="Oshima K."/>
            <person name="Furuya K."/>
            <person name="Yoshino C."/>
            <person name="Shiba T."/>
            <person name="Hattori M."/>
            <person name="Ogasawara N."/>
            <person name="Hayashi H."/>
            <person name="Hiramatsu K."/>
        </authorList>
    </citation>
    <scope>NUCLEOTIDE SEQUENCE [LARGE SCALE GENOMIC DNA]</scope>
    <source>
        <strain>N315</strain>
    </source>
</reference>
<gene>
    <name evidence="1" type="primary">agrB</name>
    <name type="ordered locus">SA1842</name>
</gene>
<feature type="chain" id="PRO_0000168121" description="Accessory gene regulator protein B">
    <location>
        <begin position="1"/>
        <end position="187"/>
    </location>
</feature>
<feature type="transmembrane region" description="Helical" evidence="1">
    <location>
        <begin position="49"/>
        <end position="69"/>
    </location>
</feature>
<feature type="transmembrane region" description="Helical" evidence="1">
    <location>
        <begin position="82"/>
        <end position="102"/>
    </location>
</feature>
<feature type="transmembrane region" description="Helical" evidence="1">
    <location>
        <begin position="106"/>
        <end position="126"/>
    </location>
</feature>
<feature type="transmembrane region" description="Helical" evidence="1">
    <location>
        <begin position="144"/>
        <end position="164"/>
    </location>
</feature>
<feature type="transmembrane region" description="Helical" evidence="1">
    <location>
        <begin position="166"/>
        <end position="186"/>
    </location>
</feature>
<comment type="function">
    <text evidence="1">Essential for the production of a quorum sensing system signal molecule, the autoinducing peptide (AIP). This quorum sensing system is responsible for the regulation of the expression of virulence factor genes. Involved in the proteolytic processing of AgrD, the precursor of AIP.</text>
</comment>
<comment type="subcellular location">
    <subcellularLocation>
        <location evidence="1">Cell membrane</location>
        <topology evidence="1">Multi-pass membrane protein</topology>
    </subcellularLocation>
</comment>
<comment type="similarity">
    <text evidence="1">Belongs to the AgrB family.</text>
</comment>
<sequence length="187" mass="21680">MNYFDNKIDQFATYLQKRNNLDHIQFLQVRLGMQIIVGNFFKILVTYSISIFLSVFLFTLVTHLSYMLIRYNAHGAHAKSSILCYIQSILTFVFVPYFLINIDINFTYLLALSIIGLISVVIYAPAATKKQPIPIKLVKRKKYLSIIMYLLVLILSLIIHPFYAQFMLLGILVESITLLPIFFPKED</sequence>
<evidence type="ECO:0000255" key="1">
    <source>
        <dbReference type="HAMAP-Rule" id="MF_00784"/>
    </source>
</evidence>